<reference key="1">
    <citation type="submission" date="2008-04" db="EMBL/GenBank/DDBJ databases">
        <title>Complete sequence of Yersinia pseudotuberculosis PB1/+.</title>
        <authorList>
            <person name="Copeland A."/>
            <person name="Lucas S."/>
            <person name="Lapidus A."/>
            <person name="Glavina del Rio T."/>
            <person name="Dalin E."/>
            <person name="Tice H."/>
            <person name="Bruce D."/>
            <person name="Goodwin L."/>
            <person name="Pitluck S."/>
            <person name="Munk A.C."/>
            <person name="Brettin T."/>
            <person name="Detter J.C."/>
            <person name="Han C."/>
            <person name="Tapia R."/>
            <person name="Schmutz J."/>
            <person name="Larimer F."/>
            <person name="Land M."/>
            <person name="Hauser L."/>
            <person name="Challacombe J.F."/>
            <person name="Green L."/>
            <person name="Lindler L.E."/>
            <person name="Nikolich M.P."/>
            <person name="Richardson P."/>
        </authorList>
    </citation>
    <scope>NUCLEOTIDE SEQUENCE [LARGE SCALE GENOMIC DNA]</scope>
    <source>
        <strain>PB1/+</strain>
    </source>
</reference>
<proteinExistence type="inferred from homology"/>
<sequence>MIRILLSNDDGISAPGIQTLASALREFAQVQIVAPDRNRSGASNALTLDSALRITTLSNGDIAVQQGTPTDCVYLGVNALMRPRPDIVVSGINAGPNLGDDVIYSGTVAAAMEGRHLGYPALAVSLNGHQHYDTAAAVTCRLLRALQRKPLRTGKILNINVPDLPLSEIKGIRVTRCGSRHPAEQVFCQQDPRGQDLYWIGPPGEKYDAGPDTDFAAVEQGYVSITPLQVDLTAYTAQEVVESWLANTEVDGEW</sequence>
<organism>
    <name type="scientific">Yersinia pseudotuberculosis serotype IB (strain PB1/+)</name>
    <dbReference type="NCBI Taxonomy" id="502801"/>
    <lineage>
        <taxon>Bacteria</taxon>
        <taxon>Pseudomonadati</taxon>
        <taxon>Pseudomonadota</taxon>
        <taxon>Gammaproteobacteria</taxon>
        <taxon>Enterobacterales</taxon>
        <taxon>Yersiniaceae</taxon>
        <taxon>Yersinia</taxon>
    </lineage>
</organism>
<name>SURE_YERPB</name>
<comment type="function">
    <text evidence="1">Nucleotidase with a broad substrate specificity as it can dephosphorylate various ribo- and deoxyribonucleoside 5'-monophosphates and ribonucleoside 3'-monophosphates with highest affinity to 3'-AMP. Also hydrolyzes polyphosphate (exopolyphosphatase activity) with the preference for short-chain-length substrates (P20-25). Might be involved in the regulation of dNTP and NTP pools, and in the turnover of 3'-mononucleotides produced by numerous intracellular RNases (T1, T2, and F) during the degradation of various RNAs.</text>
</comment>
<comment type="catalytic activity">
    <reaction evidence="1">
        <text>a ribonucleoside 5'-phosphate + H2O = a ribonucleoside + phosphate</text>
        <dbReference type="Rhea" id="RHEA:12484"/>
        <dbReference type="ChEBI" id="CHEBI:15377"/>
        <dbReference type="ChEBI" id="CHEBI:18254"/>
        <dbReference type="ChEBI" id="CHEBI:43474"/>
        <dbReference type="ChEBI" id="CHEBI:58043"/>
        <dbReference type="EC" id="3.1.3.5"/>
    </reaction>
</comment>
<comment type="catalytic activity">
    <reaction evidence="1">
        <text>a ribonucleoside 3'-phosphate + H2O = a ribonucleoside + phosphate</text>
        <dbReference type="Rhea" id="RHEA:10144"/>
        <dbReference type="ChEBI" id="CHEBI:13197"/>
        <dbReference type="ChEBI" id="CHEBI:15377"/>
        <dbReference type="ChEBI" id="CHEBI:18254"/>
        <dbReference type="ChEBI" id="CHEBI:43474"/>
        <dbReference type="EC" id="3.1.3.6"/>
    </reaction>
</comment>
<comment type="catalytic activity">
    <reaction evidence="1">
        <text>[phosphate](n) + H2O = [phosphate](n-1) + phosphate + H(+)</text>
        <dbReference type="Rhea" id="RHEA:21528"/>
        <dbReference type="Rhea" id="RHEA-COMP:9859"/>
        <dbReference type="Rhea" id="RHEA-COMP:14279"/>
        <dbReference type="ChEBI" id="CHEBI:15377"/>
        <dbReference type="ChEBI" id="CHEBI:15378"/>
        <dbReference type="ChEBI" id="CHEBI:16838"/>
        <dbReference type="ChEBI" id="CHEBI:43474"/>
        <dbReference type="EC" id="3.6.1.11"/>
    </reaction>
</comment>
<comment type="cofactor">
    <cofactor evidence="1">
        <name>a divalent metal cation</name>
        <dbReference type="ChEBI" id="CHEBI:60240"/>
    </cofactor>
    <text evidence="1">Binds 1 divalent metal cation per subunit.</text>
</comment>
<comment type="subcellular location">
    <subcellularLocation>
        <location evidence="1">Cytoplasm</location>
    </subcellularLocation>
</comment>
<comment type="similarity">
    <text evidence="1">Belongs to the SurE nucleotidase family.</text>
</comment>
<protein>
    <recommendedName>
        <fullName evidence="1">5'/3'-nucleotidase SurE</fullName>
        <ecNumber evidence="1">3.1.3.5</ecNumber>
        <ecNumber evidence="1">3.1.3.6</ecNumber>
    </recommendedName>
    <alternativeName>
        <fullName evidence="1">Exopolyphosphatase</fullName>
        <ecNumber evidence="1">3.6.1.11</ecNumber>
    </alternativeName>
    <alternativeName>
        <fullName evidence="1">Nucleoside monophosphate phosphohydrolase</fullName>
    </alternativeName>
</protein>
<accession>B2K580</accession>
<gene>
    <name evidence="1" type="primary">surE</name>
    <name type="ordered locus">YPTS_0807</name>
</gene>
<dbReference type="EC" id="3.1.3.5" evidence="1"/>
<dbReference type="EC" id="3.1.3.6" evidence="1"/>
<dbReference type="EC" id="3.6.1.11" evidence="1"/>
<dbReference type="EMBL" id="CP001048">
    <property type="protein sequence ID" value="ACC87791.1"/>
    <property type="molecule type" value="Genomic_DNA"/>
</dbReference>
<dbReference type="RefSeq" id="WP_011191778.1">
    <property type="nucleotide sequence ID" value="NZ_CP009780.1"/>
</dbReference>
<dbReference type="SMR" id="B2K580"/>
<dbReference type="GeneID" id="49787219"/>
<dbReference type="KEGG" id="ypb:YPTS_0807"/>
<dbReference type="PATRIC" id="fig|502801.10.peg.138"/>
<dbReference type="GO" id="GO:0005737">
    <property type="term" value="C:cytoplasm"/>
    <property type="evidence" value="ECO:0007669"/>
    <property type="project" value="UniProtKB-SubCell"/>
</dbReference>
<dbReference type="GO" id="GO:0008254">
    <property type="term" value="F:3'-nucleotidase activity"/>
    <property type="evidence" value="ECO:0007669"/>
    <property type="project" value="UniProtKB-UniRule"/>
</dbReference>
<dbReference type="GO" id="GO:0008253">
    <property type="term" value="F:5'-nucleotidase activity"/>
    <property type="evidence" value="ECO:0007669"/>
    <property type="project" value="UniProtKB-UniRule"/>
</dbReference>
<dbReference type="GO" id="GO:0004309">
    <property type="term" value="F:exopolyphosphatase activity"/>
    <property type="evidence" value="ECO:0007669"/>
    <property type="project" value="UniProtKB-UniRule"/>
</dbReference>
<dbReference type="GO" id="GO:0046872">
    <property type="term" value="F:metal ion binding"/>
    <property type="evidence" value="ECO:0007669"/>
    <property type="project" value="UniProtKB-UniRule"/>
</dbReference>
<dbReference type="GO" id="GO:0000166">
    <property type="term" value="F:nucleotide binding"/>
    <property type="evidence" value="ECO:0007669"/>
    <property type="project" value="UniProtKB-KW"/>
</dbReference>
<dbReference type="FunFam" id="3.40.1210.10:FF:000001">
    <property type="entry name" value="5'/3'-nucleotidase SurE"/>
    <property type="match status" value="1"/>
</dbReference>
<dbReference type="Gene3D" id="3.40.1210.10">
    <property type="entry name" value="Survival protein SurE-like phosphatase/nucleotidase"/>
    <property type="match status" value="1"/>
</dbReference>
<dbReference type="HAMAP" id="MF_00060">
    <property type="entry name" value="SurE"/>
    <property type="match status" value="1"/>
</dbReference>
<dbReference type="InterPro" id="IPR030048">
    <property type="entry name" value="SurE"/>
</dbReference>
<dbReference type="InterPro" id="IPR002828">
    <property type="entry name" value="SurE-like_Pase/nucleotidase"/>
</dbReference>
<dbReference type="InterPro" id="IPR036523">
    <property type="entry name" value="SurE-like_sf"/>
</dbReference>
<dbReference type="NCBIfam" id="NF001488">
    <property type="entry name" value="PRK00346.1-1"/>
    <property type="match status" value="1"/>
</dbReference>
<dbReference type="NCBIfam" id="NF001489">
    <property type="entry name" value="PRK00346.1-3"/>
    <property type="match status" value="1"/>
</dbReference>
<dbReference type="NCBIfam" id="NF001490">
    <property type="entry name" value="PRK00346.1-4"/>
    <property type="match status" value="1"/>
</dbReference>
<dbReference type="NCBIfam" id="TIGR00087">
    <property type="entry name" value="surE"/>
    <property type="match status" value="1"/>
</dbReference>
<dbReference type="PANTHER" id="PTHR30457">
    <property type="entry name" value="5'-NUCLEOTIDASE SURE"/>
    <property type="match status" value="1"/>
</dbReference>
<dbReference type="PANTHER" id="PTHR30457:SF12">
    <property type="entry name" value="5'_3'-NUCLEOTIDASE SURE"/>
    <property type="match status" value="1"/>
</dbReference>
<dbReference type="Pfam" id="PF01975">
    <property type="entry name" value="SurE"/>
    <property type="match status" value="1"/>
</dbReference>
<dbReference type="SUPFAM" id="SSF64167">
    <property type="entry name" value="SurE-like"/>
    <property type="match status" value="1"/>
</dbReference>
<keyword id="KW-0963">Cytoplasm</keyword>
<keyword id="KW-0378">Hydrolase</keyword>
<keyword id="KW-0479">Metal-binding</keyword>
<keyword id="KW-0547">Nucleotide-binding</keyword>
<evidence type="ECO:0000255" key="1">
    <source>
        <dbReference type="HAMAP-Rule" id="MF_00060"/>
    </source>
</evidence>
<feature type="chain" id="PRO_1000092051" description="5'/3'-nucleotidase SurE">
    <location>
        <begin position="1"/>
        <end position="254"/>
    </location>
</feature>
<feature type="binding site" evidence="1">
    <location>
        <position position="9"/>
    </location>
    <ligand>
        <name>a divalent metal cation</name>
        <dbReference type="ChEBI" id="CHEBI:60240"/>
    </ligand>
</feature>
<feature type="binding site" evidence="1">
    <location>
        <position position="10"/>
    </location>
    <ligand>
        <name>a divalent metal cation</name>
        <dbReference type="ChEBI" id="CHEBI:60240"/>
    </ligand>
</feature>
<feature type="binding site" evidence="1">
    <location>
        <position position="40"/>
    </location>
    <ligand>
        <name>a divalent metal cation</name>
        <dbReference type="ChEBI" id="CHEBI:60240"/>
    </ligand>
</feature>
<feature type="binding site" evidence="1">
    <location>
        <position position="93"/>
    </location>
    <ligand>
        <name>a divalent metal cation</name>
        <dbReference type="ChEBI" id="CHEBI:60240"/>
    </ligand>
</feature>